<comment type="function">
    <text evidence="2">Catalyzes the formation of N(7)-methylguanine at position 46 (m7G46) in tRNA.</text>
</comment>
<comment type="catalytic activity">
    <reaction evidence="2">
        <text>guanosine(46) in tRNA + S-adenosyl-L-methionine = N(7)-methylguanosine(46) in tRNA + S-adenosyl-L-homocysteine</text>
        <dbReference type="Rhea" id="RHEA:42708"/>
        <dbReference type="Rhea" id="RHEA-COMP:10188"/>
        <dbReference type="Rhea" id="RHEA-COMP:10189"/>
        <dbReference type="ChEBI" id="CHEBI:57856"/>
        <dbReference type="ChEBI" id="CHEBI:59789"/>
        <dbReference type="ChEBI" id="CHEBI:74269"/>
        <dbReference type="ChEBI" id="CHEBI:74480"/>
        <dbReference type="EC" id="2.1.1.33"/>
    </reaction>
</comment>
<comment type="pathway">
    <text evidence="2">tRNA modification; N(7)-methylguanine-tRNA biosynthesis.</text>
</comment>
<comment type="similarity">
    <text evidence="2">Belongs to the class I-like SAM-binding methyltransferase superfamily. TrmB family.</text>
</comment>
<organism>
    <name type="scientific">Alcanivorax borkumensis (strain ATCC 700651 / DSM 11573 / NCIMB 13689 / SK2)</name>
    <dbReference type="NCBI Taxonomy" id="393595"/>
    <lineage>
        <taxon>Bacteria</taxon>
        <taxon>Pseudomonadati</taxon>
        <taxon>Pseudomonadota</taxon>
        <taxon>Gammaproteobacteria</taxon>
        <taxon>Oceanospirillales</taxon>
        <taxon>Alcanivoracaceae</taxon>
        <taxon>Alcanivorax</taxon>
    </lineage>
</organism>
<reference key="1">
    <citation type="journal article" date="2006" name="Nat. Biotechnol.">
        <title>Genome sequence of the ubiquitous hydrocarbon-degrading marine bacterium Alcanivorax borkumensis.</title>
        <authorList>
            <person name="Schneiker S."/>
            <person name="Martins dos Santos V.A.P."/>
            <person name="Bartels D."/>
            <person name="Bekel T."/>
            <person name="Brecht M."/>
            <person name="Buhrmester J."/>
            <person name="Chernikova T.N."/>
            <person name="Denaro R."/>
            <person name="Ferrer M."/>
            <person name="Gertler C."/>
            <person name="Goesmann A."/>
            <person name="Golyshina O.V."/>
            <person name="Kaminski F."/>
            <person name="Khachane A.N."/>
            <person name="Lang S."/>
            <person name="Linke B."/>
            <person name="McHardy A.C."/>
            <person name="Meyer F."/>
            <person name="Nechitaylo T."/>
            <person name="Puehler A."/>
            <person name="Regenhardt D."/>
            <person name="Rupp O."/>
            <person name="Sabirova J.S."/>
            <person name="Selbitschka W."/>
            <person name="Yakimov M.M."/>
            <person name="Timmis K.N."/>
            <person name="Vorhoelter F.-J."/>
            <person name="Weidner S."/>
            <person name="Kaiser O."/>
            <person name="Golyshin P.N."/>
        </authorList>
    </citation>
    <scope>NUCLEOTIDE SEQUENCE [LARGE SCALE GENOMIC DNA]</scope>
    <source>
        <strain>ATCC 700651 / DSM 11573 / NCIMB 13689 / SK2</strain>
    </source>
</reference>
<evidence type="ECO:0000250" key="1"/>
<evidence type="ECO:0000255" key="2">
    <source>
        <dbReference type="HAMAP-Rule" id="MF_01057"/>
    </source>
</evidence>
<protein>
    <recommendedName>
        <fullName evidence="2">tRNA (guanine-N(7)-)-methyltransferase</fullName>
        <ecNumber evidence="2">2.1.1.33</ecNumber>
    </recommendedName>
    <alternativeName>
        <fullName evidence="2">tRNA (guanine(46)-N(7))-methyltransferase</fullName>
    </alternativeName>
    <alternativeName>
        <fullName evidence="2">tRNA(m7G46)-methyltransferase</fullName>
    </alternativeName>
</protein>
<keyword id="KW-0489">Methyltransferase</keyword>
<keyword id="KW-1185">Reference proteome</keyword>
<keyword id="KW-0949">S-adenosyl-L-methionine</keyword>
<keyword id="KW-0808">Transferase</keyword>
<keyword id="KW-0819">tRNA processing</keyword>
<feature type="chain" id="PRO_0000288115" description="tRNA (guanine-N(7)-)-methyltransferase">
    <location>
        <begin position="1"/>
        <end position="239"/>
    </location>
</feature>
<feature type="active site" evidence="1">
    <location>
        <position position="144"/>
    </location>
</feature>
<feature type="binding site" evidence="2">
    <location>
        <position position="69"/>
    </location>
    <ligand>
        <name>S-adenosyl-L-methionine</name>
        <dbReference type="ChEBI" id="CHEBI:59789"/>
    </ligand>
</feature>
<feature type="binding site" evidence="2">
    <location>
        <position position="94"/>
    </location>
    <ligand>
        <name>S-adenosyl-L-methionine</name>
        <dbReference type="ChEBI" id="CHEBI:59789"/>
    </ligand>
</feature>
<feature type="binding site" evidence="2">
    <location>
        <position position="121"/>
    </location>
    <ligand>
        <name>S-adenosyl-L-methionine</name>
        <dbReference type="ChEBI" id="CHEBI:59789"/>
    </ligand>
</feature>
<feature type="binding site" evidence="2">
    <location>
        <position position="144"/>
    </location>
    <ligand>
        <name>S-adenosyl-L-methionine</name>
        <dbReference type="ChEBI" id="CHEBI:59789"/>
    </ligand>
</feature>
<feature type="binding site" evidence="2">
    <location>
        <position position="148"/>
    </location>
    <ligand>
        <name>substrate</name>
    </ligand>
</feature>
<feature type="binding site" evidence="2">
    <location>
        <position position="180"/>
    </location>
    <ligand>
        <name>substrate</name>
    </ligand>
</feature>
<feature type="binding site" evidence="2">
    <location>
        <begin position="217"/>
        <end position="220"/>
    </location>
    <ligand>
        <name>substrate</name>
    </ligand>
</feature>
<dbReference type="EC" id="2.1.1.33" evidence="2"/>
<dbReference type="EMBL" id="AM286690">
    <property type="protein sequence ID" value="CAL18021.1"/>
    <property type="molecule type" value="Genomic_DNA"/>
</dbReference>
<dbReference type="RefSeq" id="WP_011589844.1">
    <property type="nucleotide sequence ID" value="NC_008260.1"/>
</dbReference>
<dbReference type="SMR" id="Q0VLC7"/>
<dbReference type="STRING" id="393595.ABO_2573"/>
<dbReference type="KEGG" id="abo:ABO_2573"/>
<dbReference type="eggNOG" id="COG0220">
    <property type="taxonomic scope" value="Bacteria"/>
</dbReference>
<dbReference type="HOGENOM" id="CLU_050910_0_1_6"/>
<dbReference type="OrthoDB" id="9802090at2"/>
<dbReference type="UniPathway" id="UPA00989"/>
<dbReference type="Proteomes" id="UP000008871">
    <property type="component" value="Chromosome"/>
</dbReference>
<dbReference type="GO" id="GO:0043527">
    <property type="term" value="C:tRNA methyltransferase complex"/>
    <property type="evidence" value="ECO:0007669"/>
    <property type="project" value="TreeGrafter"/>
</dbReference>
<dbReference type="GO" id="GO:0008176">
    <property type="term" value="F:tRNA (guanine(46)-N7)-methyltransferase activity"/>
    <property type="evidence" value="ECO:0007669"/>
    <property type="project" value="UniProtKB-UniRule"/>
</dbReference>
<dbReference type="FunFam" id="3.40.50.150:FF:000035">
    <property type="entry name" value="tRNA (guanine-N(7)-)-methyltransferase"/>
    <property type="match status" value="1"/>
</dbReference>
<dbReference type="Gene3D" id="3.40.50.150">
    <property type="entry name" value="Vaccinia Virus protein VP39"/>
    <property type="match status" value="1"/>
</dbReference>
<dbReference type="HAMAP" id="MF_01057">
    <property type="entry name" value="tRNA_methyltr_TrmB"/>
    <property type="match status" value="1"/>
</dbReference>
<dbReference type="InterPro" id="IPR029063">
    <property type="entry name" value="SAM-dependent_MTases_sf"/>
</dbReference>
<dbReference type="InterPro" id="IPR003358">
    <property type="entry name" value="tRNA_(Gua-N-7)_MeTrfase_Trmb"/>
</dbReference>
<dbReference type="InterPro" id="IPR055361">
    <property type="entry name" value="tRNA_methyltr_TrmB_bact"/>
</dbReference>
<dbReference type="NCBIfam" id="TIGR00091">
    <property type="entry name" value="tRNA (guanosine(46)-N7)-methyltransferase TrmB"/>
    <property type="match status" value="1"/>
</dbReference>
<dbReference type="PANTHER" id="PTHR23417">
    <property type="entry name" value="3-DEOXY-D-MANNO-OCTULOSONIC-ACID TRANSFERASE/TRNA GUANINE-N 7 - -METHYLTRANSFERASE"/>
    <property type="match status" value="1"/>
</dbReference>
<dbReference type="PANTHER" id="PTHR23417:SF14">
    <property type="entry name" value="PENTACOTRIPEPTIDE-REPEAT REGION OF PRORP DOMAIN-CONTAINING PROTEIN"/>
    <property type="match status" value="1"/>
</dbReference>
<dbReference type="Pfam" id="PF02390">
    <property type="entry name" value="Methyltransf_4"/>
    <property type="match status" value="1"/>
</dbReference>
<dbReference type="SUPFAM" id="SSF53335">
    <property type="entry name" value="S-adenosyl-L-methionine-dependent methyltransferases"/>
    <property type="match status" value="1"/>
</dbReference>
<dbReference type="PROSITE" id="PS51625">
    <property type="entry name" value="SAM_MT_TRMB"/>
    <property type="match status" value="1"/>
</dbReference>
<sequence length="239" mass="27171">MLDFINHDKDPETGKVMRKVRSFVLREGRLTAGQRNALDTLWPRFGLERDQGMLNPESVFGRDAPRVLEIGYGMGQSLAQMAAADPDKDFIGIEVHRPGVGALLMEIEQQGLSNLRSYCDDAVEILELCIPDNSLARVQLYFPDPWHKKKHHKRRIVQPAWVALVQRKLQPGGILHMATDWENYAEHMMEVMDAAAGFSNLAGPSAFSPRPSWRPETKFERRGEKLGHGVWDLLFEKRA</sequence>
<proteinExistence type="inferred from homology"/>
<name>TRMB_ALCBS</name>
<accession>Q0VLC7</accession>
<gene>
    <name evidence="2" type="primary">trmB</name>
    <name type="ordered locus">ABO_2573</name>
</gene>